<keyword id="KW-0106">Calcium</keyword>
<keyword id="KW-0903">Direct protein sequencing</keyword>
<keyword id="KW-1015">Disulfide bond</keyword>
<keyword id="KW-0378">Hydrolase</keyword>
<keyword id="KW-0442">Lipid degradation</keyword>
<keyword id="KW-0443">Lipid metabolism</keyword>
<keyword id="KW-0479">Metal-binding</keyword>
<keyword id="KW-0964">Secreted</keyword>
<keyword id="KW-0732">Signal</keyword>
<comment type="function">
    <text evidence="6">PLA2 catalyzes the calcium-dependent hydrolysis of the 2-acyl groups in 3-sn-phosphoglycerides.</text>
</comment>
<comment type="catalytic activity">
    <reaction evidence="6">
        <text>a 1,2-diacyl-sn-glycero-3-phosphocholine + H2O = a 1-acyl-sn-glycero-3-phosphocholine + a fatty acid + H(+)</text>
        <dbReference type="Rhea" id="RHEA:15801"/>
        <dbReference type="ChEBI" id="CHEBI:15377"/>
        <dbReference type="ChEBI" id="CHEBI:15378"/>
        <dbReference type="ChEBI" id="CHEBI:28868"/>
        <dbReference type="ChEBI" id="CHEBI:57643"/>
        <dbReference type="ChEBI" id="CHEBI:58168"/>
        <dbReference type="EC" id="3.1.1.4"/>
    </reaction>
</comment>
<comment type="cofactor">
    <cofactor evidence="3">
        <name>Ca(2+)</name>
        <dbReference type="ChEBI" id="CHEBI:29108"/>
    </cofactor>
    <text evidence="1">Binds 1 Ca(2+) ion.</text>
</comment>
<comment type="biophysicochemical properties">
    <kinetics>
        <Vmax evidence="6">110.0 uM/min/mg enzyme for egg yolk</Vmax>
    </kinetics>
</comment>
<comment type="subcellular location">
    <subcellularLocation>
        <location evidence="6">Secreted</location>
    </subcellularLocation>
</comment>
<comment type="tissue specificity">
    <text evidence="9">Expressed by the venom gland.</text>
</comment>
<comment type="mass spectrometry"/>
<comment type="similarity">
    <text evidence="8">Belongs to the phospholipase A2 family.</text>
</comment>
<dbReference type="EC" id="3.1.1.4" evidence="5"/>
<dbReference type="EMBL" id="KC144387">
    <property type="status" value="NOT_ANNOTATED_CDS"/>
    <property type="molecule type" value="mRNA"/>
</dbReference>
<dbReference type="SMR" id="P0DPT7"/>
<dbReference type="GO" id="GO:0005576">
    <property type="term" value="C:extracellular region"/>
    <property type="evidence" value="ECO:0007669"/>
    <property type="project" value="UniProtKB-SubCell"/>
</dbReference>
<dbReference type="GO" id="GO:0005509">
    <property type="term" value="F:calcium ion binding"/>
    <property type="evidence" value="ECO:0007669"/>
    <property type="project" value="InterPro"/>
</dbReference>
<dbReference type="GO" id="GO:0004623">
    <property type="term" value="F:phospholipase A2 activity"/>
    <property type="evidence" value="ECO:0007669"/>
    <property type="project" value="UniProtKB-EC"/>
</dbReference>
<dbReference type="GO" id="GO:0050482">
    <property type="term" value="P:arachidonate secretion"/>
    <property type="evidence" value="ECO:0007669"/>
    <property type="project" value="InterPro"/>
</dbReference>
<dbReference type="GO" id="GO:0016042">
    <property type="term" value="P:lipid catabolic process"/>
    <property type="evidence" value="ECO:0007669"/>
    <property type="project" value="UniProtKB-KW"/>
</dbReference>
<dbReference type="GO" id="GO:0006644">
    <property type="term" value="P:phospholipid metabolic process"/>
    <property type="evidence" value="ECO:0007669"/>
    <property type="project" value="InterPro"/>
</dbReference>
<dbReference type="CDD" id="cd00125">
    <property type="entry name" value="PLA2c"/>
    <property type="match status" value="1"/>
</dbReference>
<dbReference type="Gene3D" id="1.20.90.10">
    <property type="entry name" value="Phospholipase A2 domain"/>
    <property type="match status" value="1"/>
</dbReference>
<dbReference type="InterPro" id="IPR001211">
    <property type="entry name" value="PLipase_A2"/>
</dbReference>
<dbReference type="InterPro" id="IPR033112">
    <property type="entry name" value="PLipase_A2_Asp_AS"/>
</dbReference>
<dbReference type="InterPro" id="IPR016090">
    <property type="entry name" value="PLipase_A2_dom"/>
</dbReference>
<dbReference type="InterPro" id="IPR036444">
    <property type="entry name" value="PLipase_A2_dom_sf"/>
</dbReference>
<dbReference type="InterPro" id="IPR033113">
    <property type="entry name" value="PLipase_A2_His_AS"/>
</dbReference>
<dbReference type="PANTHER" id="PTHR11716">
    <property type="entry name" value="PHOSPHOLIPASE A2 FAMILY MEMBER"/>
    <property type="match status" value="1"/>
</dbReference>
<dbReference type="PANTHER" id="PTHR11716:SF47">
    <property type="entry name" value="PHOSPHOLIPASE A2-ALPHA"/>
    <property type="match status" value="1"/>
</dbReference>
<dbReference type="Pfam" id="PF00068">
    <property type="entry name" value="Phospholip_A2_1"/>
    <property type="match status" value="1"/>
</dbReference>
<dbReference type="PRINTS" id="PR00389">
    <property type="entry name" value="PHPHLIPASEA2"/>
</dbReference>
<dbReference type="SMART" id="SM00085">
    <property type="entry name" value="PA2c"/>
    <property type="match status" value="1"/>
</dbReference>
<dbReference type="SUPFAM" id="SSF48619">
    <property type="entry name" value="Phospholipase A2, PLA2"/>
    <property type="match status" value="1"/>
</dbReference>
<dbReference type="PROSITE" id="PS00119">
    <property type="entry name" value="PA2_ASP"/>
    <property type="match status" value="1"/>
</dbReference>
<dbReference type="PROSITE" id="PS00118">
    <property type="entry name" value="PA2_HIS"/>
    <property type="match status" value="1"/>
</dbReference>
<proteinExistence type="evidence at protein level"/>
<sequence>MSPKFLLFSIIAVWSCAAAIEALFIQPRSLANFLSMTLTAAKRSPQEYDGYGNYCGWGGEGTPVDSIDRCCQVHDNCYGTVNENECGHYIRNVKLIDYDWHMEGTEIVCDPKDDACGRALCKCDKDIIDCFNENDKDYNPEYNKVIG</sequence>
<evidence type="ECO:0000250" key="1"/>
<evidence type="ECO:0000250" key="2">
    <source>
        <dbReference type="UniProtKB" id="O15496"/>
    </source>
</evidence>
<evidence type="ECO:0000250" key="3">
    <source>
        <dbReference type="UniProtKB" id="P14555"/>
    </source>
</evidence>
<evidence type="ECO:0000255" key="4"/>
<evidence type="ECO:0000255" key="5">
    <source>
        <dbReference type="PROSITE-ProRule" id="PRU10035"/>
    </source>
</evidence>
<evidence type="ECO:0000269" key="6">
    <source>
    </source>
</evidence>
<evidence type="ECO:0000303" key="7">
    <source>
    </source>
</evidence>
<evidence type="ECO:0000305" key="8"/>
<evidence type="ECO:0000305" key="9">
    <source>
    </source>
</evidence>
<protein>
    <recommendedName>
        <fullName evidence="7">Phospholipase A2 SSD387</fullName>
        <shortName>PLA2</shortName>
        <ecNumber evidence="5">3.1.1.4</ecNumber>
    </recommendedName>
</protein>
<accession>P0DPT7</accession>
<reference key="1">
    <citation type="journal article" date="2012" name="J. Proteome Res.">
        <title>Venomic and transcriptomic analysis of centipede Scolopendra subspinipes dehaani.</title>
        <authorList>
            <person name="Liu Z.C."/>
            <person name="Zhang R."/>
            <person name="Zhao F."/>
            <person name="Chen Z.M."/>
            <person name="Liu H.W."/>
            <person name="Wang Y.J."/>
            <person name="Jiang P."/>
            <person name="Zhang Y."/>
            <person name="Wu Y."/>
            <person name="Ding J.P."/>
            <person name="Lee W.H."/>
            <person name="Zhang Y."/>
        </authorList>
    </citation>
    <scope>NUCLEOTIDE SEQUENCE [MRNA]</scope>
    <scope>PROTEIN SEQUENCE OF 29-56</scope>
    <scope>SUBCELLULAR LOCATION</scope>
    <scope>MASS SPECTROMETRY</scope>
    <scope>FUNCTION</scope>
    <scope>CATALYTIC ACTIVITY</scope>
    <scope>BIOPHYSICOCHEMICAL PROPERTIES</scope>
    <source>
        <tissue>Venom</tissue>
        <tissue>Venom gland</tissue>
    </source>
</reference>
<feature type="signal peptide" evidence="4">
    <location>
        <begin position="1"/>
        <end position="19"/>
    </location>
</feature>
<feature type="propeptide" id="PRO_0000446680" evidence="9">
    <location>
        <begin position="20"/>
        <end position="28"/>
    </location>
</feature>
<feature type="chain" id="PRO_0000446681" description="Phospholipase A2 SSD387" evidence="9">
    <location>
        <begin position="29"/>
        <end position="147"/>
    </location>
</feature>
<feature type="active site" evidence="2">
    <location>
        <position position="74"/>
    </location>
</feature>
<feature type="active site" evidence="2">
    <location>
        <position position="124"/>
    </location>
</feature>
<feature type="binding site" evidence="3">
    <location>
        <position position="56"/>
    </location>
    <ligand>
        <name>Ca(2+)</name>
        <dbReference type="ChEBI" id="CHEBI:29108"/>
    </ligand>
</feature>
<feature type="binding site" evidence="3">
    <location>
        <position position="58"/>
    </location>
    <ligand>
        <name>Ca(2+)</name>
        <dbReference type="ChEBI" id="CHEBI:29108"/>
    </ligand>
</feature>
<feature type="binding site" evidence="3">
    <location>
        <position position="75"/>
    </location>
    <ligand>
        <name>Ca(2+)</name>
        <dbReference type="ChEBI" id="CHEBI:29108"/>
    </ligand>
</feature>
<feature type="disulfide bond" evidence="3">
    <location>
        <begin position="55"/>
        <end position="71"/>
    </location>
</feature>
<feature type="disulfide bond" evidence="3">
    <location>
        <begin position="70"/>
        <end position="130"/>
    </location>
</feature>
<feature type="disulfide bond" evidence="3">
    <location>
        <begin position="77"/>
        <end position="123"/>
    </location>
</feature>
<feature type="disulfide bond" evidence="3">
    <location>
        <begin position="86"/>
        <end position="116"/>
    </location>
</feature>
<feature type="disulfide bond" evidence="3">
    <location>
        <begin position="109"/>
        <end position="121"/>
    </location>
</feature>
<name>PA21_SCODE</name>
<organism>
    <name type="scientific">Scolopendra dehaani</name>
    <name type="common">Thai centipede</name>
    <name type="synonym">Scolopendra subspinipes dehaani</name>
    <dbReference type="NCBI Taxonomy" id="2609776"/>
    <lineage>
        <taxon>Eukaryota</taxon>
        <taxon>Metazoa</taxon>
        <taxon>Ecdysozoa</taxon>
        <taxon>Arthropoda</taxon>
        <taxon>Myriapoda</taxon>
        <taxon>Chilopoda</taxon>
        <taxon>Pleurostigmophora</taxon>
        <taxon>Scolopendromorpha</taxon>
        <taxon>Scolopendridae</taxon>
        <taxon>Scolopendra</taxon>
    </lineage>
</organism>